<name>GLGC_YERPA</name>
<protein>
    <recommendedName>
        <fullName evidence="1">Glucose-1-phosphate adenylyltransferase</fullName>
        <ecNumber evidence="1">2.7.7.27</ecNumber>
    </recommendedName>
    <alternativeName>
        <fullName evidence="1">ADP-glucose pyrophosphorylase</fullName>
        <shortName evidence="1">ADPGlc PPase</shortName>
    </alternativeName>
    <alternativeName>
        <fullName evidence="1">ADP-glucose synthase</fullName>
    </alternativeName>
</protein>
<evidence type="ECO:0000255" key="1">
    <source>
        <dbReference type="HAMAP-Rule" id="MF_00624"/>
    </source>
</evidence>
<organism>
    <name type="scientific">Yersinia pestis bv. Antiqua (strain Antiqua)</name>
    <dbReference type="NCBI Taxonomy" id="360102"/>
    <lineage>
        <taxon>Bacteria</taxon>
        <taxon>Pseudomonadati</taxon>
        <taxon>Pseudomonadota</taxon>
        <taxon>Gammaproteobacteria</taxon>
        <taxon>Enterobacterales</taxon>
        <taxon>Yersiniaceae</taxon>
        <taxon>Yersinia</taxon>
    </lineage>
</organism>
<accession>Q1C1E1</accession>
<proteinExistence type="inferred from homology"/>
<reference key="1">
    <citation type="journal article" date="2006" name="J. Bacteriol.">
        <title>Complete genome sequence of Yersinia pestis strains Antiqua and Nepal516: evidence of gene reduction in an emerging pathogen.</title>
        <authorList>
            <person name="Chain P.S.G."/>
            <person name="Hu P."/>
            <person name="Malfatti S.A."/>
            <person name="Radnedge L."/>
            <person name="Larimer F."/>
            <person name="Vergez L.M."/>
            <person name="Worsham P."/>
            <person name="Chu M.C."/>
            <person name="Andersen G.L."/>
        </authorList>
    </citation>
    <scope>NUCLEOTIDE SEQUENCE [LARGE SCALE GENOMIC DNA]</scope>
    <source>
        <strain>Antiqua</strain>
    </source>
</reference>
<feature type="chain" id="PRO_0000261907" description="Glucose-1-phosphate adenylyltransferase">
    <location>
        <begin position="1"/>
        <end position="476"/>
    </location>
</feature>
<feature type="binding site" evidence="1">
    <location>
        <position position="114"/>
    </location>
    <ligand>
        <name>alpha-D-glucose 1-phosphate</name>
        <dbReference type="ChEBI" id="CHEBI:58601"/>
    </ligand>
</feature>
<feature type="binding site" evidence="1">
    <location>
        <position position="179"/>
    </location>
    <ligand>
        <name>alpha-D-glucose 1-phosphate</name>
        <dbReference type="ChEBI" id="CHEBI:58601"/>
    </ligand>
</feature>
<feature type="binding site" evidence="1">
    <location>
        <begin position="194"/>
        <end position="195"/>
    </location>
    <ligand>
        <name>alpha-D-glucose 1-phosphate</name>
        <dbReference type="ChEBI" id="CHEBI:58601"/>
    </ligand>
</feature>
<feature type="binding site" evidence="1">
    <location>
        <position position="212"/>
    </location>
    <ligand>
        <name>alpha-D-glucose 1-phosphate</name>
        <dbReference type="ChEBI" id="CHEBI:58601"/>
    </ligand>
</feature>
<dbReference type="EC" id="2.7.7.27" evidence="1"/>
<dbReference type="EMBL" id="CP000308">
    <property type="protein sequence ID" value="ABG15731.1"/>
    <property type="molecule type" value="Genomic_DNA"/>
</dbReference>
<dbReference type="SMR" id="Q1C1E1"/>
<dbReference type="KEGG" id="ypa:YPA_3769"/>
<dbReference type="UniPathway" id="UPA00164"/>
<dbReference type="Proteomes" id="UP000001971">
    <property type="component" value="Chromosome"/>
</dbReference>
<dbReference type="GO" id="GO:0005524">
    <property type="term" value="F:ATP binding"/>
    <property type="evidence" value="ECO:0007669"/>
    <property type="project" value="UniProtKB-KW"/>
</dbReference>
<dbReference type="GO" id="GO:0008878">
    <property type="term" value="F:glucose-1-phosphate adenylyltransferase activity"/>
    <property type="evidence" value="ECO:0007669"/>
    <property type="project" value="UniProtKB-UniRule"/>
</dbReference>
<dbReference type="GO" id="GO:0005978">
    <property type="term" value="P:glycogen biosynthetic process"/>
    <property type="evidence" value="ECO:0007669"/>
    <property type="project" value="UniProtKB-UniRule"/>
</dbReference>
<dbReference type="CDD" id="cd02508">
    <property type="entry name" value="ADP_Glucose_PP"/>
    <property type="match status" value="1"/>
</dbReference>
<dbReference type="CDD" id="cd04651">
    <property type="entry name" value="LbH_G1P_AT_C"/>
    <property type="match status" value="1"/>
</dbReference>
<dbReference type="FunFam" id="3.90.550.10:FF:000014">
    <property type="entry name" value="Glucose-1-phosphate adenylyltransferase"/>
    <property type="match status" value="1"/>
</dbReference>
<dbReference type="Gene3D" id="2.160.10.10">
    <property type="entry name" value="Hexapeptide repeat proteins"/>
    <property type="match status" value="1"/>
</dbReference>
<dbReference type="Gene3D" id="3.90.550.10">
    <property type="entry name" value="Spore Coat Polysaccharide Biosynthesis Protein SpsA, Chain A"/>
    <property type="match status" value="1"/>
</dbReference>
<dbReference type="HAMAP" id="MF_00624">
    <property type="entry name" value="GlgC"/>
    <property type="match status" value="1"/>
</dbReference>
<dbReference type="InterPro" id="IPR011831">
    <property type="entry name" value="ADP-Glc_PPase"/>
</dbReference>
<dbReference type="InterPro" id="IPR005836">
    <property type="entry name" value="ADP_Glu_pyroP_CS"/>
</dbReference>
<dbReference type="InterPro" id="IPR023049">
    <property type="entry name" value="GlgC_bac"/>
</dbReference>
<dbReference type="InterPro" id="IPR056818">
    <property type="entry name" value="GlmU/GlgC-like_hexapep"/>
</dbReference>
<dbReference type="InterPro" id="IPR005835">
    <property type="entry name" value="NTP_transferase_dom"/>
</dbReference>
<dbReference type="InterPro" id="IPR029044">
    <property type="entry name" value="Nucleotide-diphossugar_trans"/>
</dbReference>
<dbReference type="InterPro" id="IPR011004">
    <property type="entry name" value="Trimer_LpxA-like_sf"/>
</dbReference>
<dbReference type="NCBIfam" id="TIGR02091">
    <property type="entry name" value="glgC"/>
    <property type="match status" value="1"/>
</dbReference>
<dbReference type="NCBIfam" id="NF001947">
    <property type="entry name" value="PRK00725.1"/>
    <property type="match status" value="1"/>
</dbReference>
<dbReference type="NCBIfam" id="NF002023">
    <property type="entry name" value="PRK00844.1"/>
    <property type="match status" value="1"/>
</dbReference>
<dbReference type="PANTHER" id="PTHR43523:SF2">
    <property type="entry name" value="GLUCOSE-1-PHOSPHATE ADENYLYLTRANSFERASE"/>
    <property type="match status" value="1"/>
</dbReference>
<dbReference type="PANTHER" id="PTHR43523">
    <property type="entry name" value="GLUCOSE-1-PHOSPHATE ADENYLYLTRANSFERASE-RELATED"/>
    <property type="match status" value="1"/>
</dbReference>
<dbReference type="Pfam" id="PF24894">
    <property type="entry name" value="Hexapep_GlmU"/>
    <property type="match status" value="1"/>
</dbReference>
<dbReference type="Pfam" id="PF00483">
    <property type="entry name" value="NTP_transferase"/>
    <property type="match status" value="1"/>
</dbReference>
<dbReference type="SUPFAM" id="SSF53448">
    <property type="entry name" value="Nucleotide-diphospho-sugar transferases"/>
    <property type="match status" value="1"/>
</dbReference>
<dbReference type="SUPFAM" id="SSF51161">
    <property type="entry name" value="Trimeric LpxA-like enzymes"/>
    <property type="match status" value="1"/>
</dbReference>
<dbReference type="PROSITE" id="PS00808">
    <property type="entry name" value="ADP_GLC_PYROPHOSPH_1"/>
    <property type="match status" value="1"/>
</dbReference>
<dbReference type="PROSITE" id="PS00809">
    <property type="entry name" value="ADP_GLC_PYROPHOSPH_2"/>
    <property type="match status" value="1"/>
</dbReference>
<dbReference type="PROSITE" id="PS00810">
    <property type="entry name" value="ADP_GLC_PYROPHOSPH_3"/>
    <property type="match status" value="1"/>
</dbReference>
<gene>
    <name evidence="1" type="primary">glgC</name>
    <name type="ordered locus">YPA_3769</name>
</gene>
<sequence>MVRFESTDSLMLARQLPNKTVALILAGGRGSRLKDLTATRAKPAVHFGGKFRIIDFALSNCLNSGVRRIGVITQYQSHTLVQHIQRGWSFLNEEMNEFVDLLPAQQRLSTEQWYKGTADAVCQNLDIIRRYDAEYIVILAGDHIYKMDYSRMLLDHVEKGAECTVACIPVPISEGSEFGIMEVTADYQITAFYEKPANPPPIPGDPSNALASMGIYIFNADYLFKLLEEDNNTPGSSHDFGKDIIPQLTARKVVWAHPFDLSCVTSNAELPPYWRDVGTLDAYWRANLDLASVTPELDMYDRAWPIRTHMEPLPPAKFVQDRSGSHGMTMNSLVSGGCIVSGSVVVHSVLFPRVRVNSFCTIDSSLLLPDVHVGRSCRLRRCIIDRACHIPEGMVIGENADEDNARFYRSEGGGGVSDSGYAGKVRGKIEPLGFLFVRLDLLIRLSLLIRLNLFIRMNLLIILTLFFKLASIQASH</sequence>
<keyword id="KW-0067">ATP-binding</keyword>
<keyword id="KW-0119">Carbohydrate metabolism</keyword>
<keyword id="KW-0320">Glycogen biosynthesis</keyword>
<keyword id="KW-0321">Glycogen metabolism</keyword>
<keyword id="KW-0547">Nucleotide-binding</keyword>
<keyword id="KW-0548">Nucleotidyltransferase</keyword>
<keyword id="KW-0808">Transferase</keyword>
<comment type="function">
    <text evidence="1">Involved in the biosynthesis of ADP-glucose, a building block required for the elongation reactions to produce glycogen. Catalyzes the reaction between ATP and alpha-D-glucose 1-phosphate (G1P) to produce pyrophosphate and ADP-Glc.</text>
</comment>
<comment type="catalytic activity">
    <reaction evidence="1">
        <text>alpha-D-glucose 1-phosphate + ATP + H(+) = ADP-alpha-D-glucose + diphosphate</text>
        <dbReference type="Rhea" id="RHEA:12120"/>
        <dbReference type="ChEBI" id="CHEBI:15378"/>
        <dbReference type="ChEBI" id="CHEBI:30616"/>
        <dbReference type="ChEBI" id="CHEBI:33019"/>
        <dbReference type="ChEBI" id="CHEBI:57498"/>
        <dbReference type="ChEBI" id="CHEBI:58601"/>
        <dbReference type="EC" id="2.7.7.27"/>
    </reaction>
</comment>
<comment type="pathway">
    <text evidence="1">Glycan biosynthesis; glycogen biosynthesis.</text>
</comment>
<comment type="subunit">
    <text evidence="1">Homotetramer.</text>
</comment>
<comment type="similarity">
    <text evidence="1">Belongs to the bacterial/plant glucose-1-phosphate adenylyltransferase family.</text>
</comment>